<keyword id="KW-0131">Cell cycle</keyword>
<keyword id="KW-0132">Cell division</keyword>
<keyword id="KW-0963">Cytoplasm</keyword>
<keyword id="KW-0498">Mitosis</keyword>
<keyword id="KW-0539">Nucleus</keyword>
<keyword id="KW-1185">Reference proteome</keyword>
<sequence>MKLERVSSNGSFKRGRDIQSLESPCTRPLKKMSPSPSFTSLKMEKPFKDIVRKYGGHLHQSSYNPGSSKVELVRPDLSLKTDQSFLQSSVQTTPNKKSCNEYLSTPEATPLKNTATENAWATSRVVSASSLSIVTPTEIKNILVDEFSELKLGQPLTAQHQRSHAVFEIPEIVENIIKMIVSLESANIPKERPCLRRNPQSYEHSLLMYKDEERAKKAWSAAQQLRDPPLVGHKEKKQGALFSCMMVNRLWLNVTRPFLFKSLHFKSVHNFKEFLRTSQETTQVMRPSHFILHKLHQVTQPDIERLSRMECQNLKWLEFYVCPRITPPLSWFDNLHKLEKLIIPGNKNIDDNFLLRLSQSIPNLKHLVLRACDNVSDSGVVCIALNCPKLKTFNIGRHRRGNLITSVSLVALGKYTQVETVGFAGCDVDDAGIWEFARLNGKNVERLSLNSCRLLTDYSLPILFALNSFPNLAVLEIRNLDKITDVRHFVKYNLWKKSLDAPILIEACERITKLIDQEENRVKRINSLVALKDMTAWVNADDEIENNVD</sequence>
<reference key="1">
    <citation type="journal article" date="1994" name="EMBO J.">
        <title>Complete DNA sequence of yeast chromosome II.</title>
        <authorList>
            <person name="Feldmann H."/>
            <person name="Aigle M."/>
            <person name="Aljinovic G."/>
            <person name="Andre B."/>
            <person name="Baclet M.C."/>
            <person name="Barthe C."/>
            <person name="Baur A."/>
            <person name="Becam A.-M."/>
            <person name="Biteau N."/>
            <person name="Boles E."/>
            <person name="Brandt T."/>
            <person name="Brendel M."/>
            <person name="Brueckner M."/>
            <person name="Bussereau F."/>
            <person name="Christiansen C."/>
            <person name="Contreras R."/>
            <person name="Crouzet M."/>
            <person name="Cziepluch C."/>
            <person name="Demolis N."/>
            <person name="Delaveau T."/>
            <person name="Doignon F."/>
            <person name="Domdey H."/>
            <person name="Duesterhus S."/>
            <person name="Dubois E."/>
            <person name="Dujon B."/>
            <person name="El Bakkoury M."/>
            <person name="Entian K.-D."/>
            <person name="Feuermann M."/>
            <person name="Fiers W."/>
            <person name="Fobo G.M."/>
            <person name="Fritz C."/>
            <person name="Gassenhuber J."/>
            <person name="Glansdorff N."/>
            <person name="Goffeau A."/>
            <person name="Grivell L.A."/>
            <person name="de Haan M."/>
            <person name="Hein C."/>
            <person name="Herbert C.J."/>
            <person name="Hollenberg C.P."/>
            <person name="Holmstroem K."/>
            <person name="Jacq C."/>
            <person name="Jacquet M."/>
            <person name="Jauniaux J.-C."/>
            <person name="Jonniaux J.-L."/>
            <person name="Kallesoee T."/>
            <person name="Kiesau P."/>
            <person name="Kirchrath L."/>
            <person name="Koetter P."/>
            <person name="Korol S."/>
            <person name="Liebl S."/>
            <person name="Logghe M."/>
            <person name="Lohan A.J.E."/>
            <person name="Louis E.J."/>
            <person name="Li Z.Y."/>
            <person name="Maat M.J."/>
            <person name="Mallet L."/>
            <person name="Mannhaupt G."/>
            <person name="Messenguy F."/>
            <person name="Miosga T."/>
            <person name="Molemans F."/>
            <person name="Mueller S."/>
            <person name="Nasr F."/>
            <person name="Obermaier B."/>
            <person name="Perea J."/>
            <person name="Pierard A."/>
            <person name="Piravandi E."/>
            <person name="Pohl F.M."/>
            <person name="Pohl T.M."/>
            <person name="Potier S."/>
            <person name="Proft M."/>
            <person name="Purnelle B."/>
            <person name="Ramezani Rad M."/>
            <person name="Rieger M."/>
            <person name="Rose M."/>
            <person name="Schaaff-Gerstenschlaeger I."/>
            <person name="Scherens B."/>
            <person name="Schwarzlose C."/>
            <person name="Skala J."/>
            <person name="Slonimski P.P."/>
            <person name="Smits P.H.M."/>
            <person name="Souciet J.-L."/>
            <person name="Steensma H.Y."/>
            <person name="Stucka R."/>
            <person name="Urrestarazu L.A."/>
            <person name="van der Aart Q.J.M."/>
            <person name="Van Dyck L."/>
            <person name="Vassarotti A."/>
            <person name="Vetter I."/>
            <person name="Vierendeels F."/>
            <person name="Vissers S."/>
            <person name="Wagner G."/>
            <person name="de Wergifosse P."/>
            <person name="Wolfe K.H."/>
            <person name="Zagulski M."/>
            <person name="Zimmermann F.K."/>
            <person name="Mewes H.-W."/>
            <person name="Kleine K."/>
        </authorList>
    </citation>
    <scope>NUCLEOTIDE SEQUENCE [LARGE SCALE GENOMIC DNA]</scope>
    <source>
        <strain>ATCC 204508 / S288c</strain>
    </source>
</reference>
<reference key="2">
    <citation type="journal article" date="2014" name="G3 (Bethesda)">
        <title>The reference genome sequence of Saccharomyces cerevisiae: Then and now.</title>
        <authorList>
            <person name="Engel S.R."/>
            <person name="Dietrich F.S."/>
            <person name="Fisk D.G."/>
            <person name="Binkley G."/>
            <person name="Balakrishnan R."/>
            <person name="Costanzo M.C."/>
            <person name="Dwight S.S."/>
            <person name="Hitz B.C."/>
            <person name="Karra K."/>
            <person name="Nash R.S."/>
            <person name="Weng S."/>
            <person name="Wong E.D."/>
            <person name="Lloyd P."/>
            <person name="Skrzypek M.S."/>
            <person name="Miyasato S.R."/>
            <person name="Simison M."/>
            <person name="Cherry J.M."/>
        </authorList>
    </citation>
    <scope>GENOME REANNOTATION</scope>
    <source>
        <strain>ATCC 204508 / S288c</strain>
    </source>
</reference>
<reference key="3">
    <citation type="journal article" date="2007" name="Genome Res.">
        <title>Approaching a complete repository of sequence-verified protein-encoding clones for Saccharomyces cerevisiae.</title>
        <authorList>
            <person name="Hu Y."/>
            <person name="Rolfs A."/>
            <person name="Bhullar B."/>
            <person name="Murthy T.V.S."/>
            <person name="Zhu C."/>
            <person name="Berger M.F."/>
            <person name="Camargo A.A."/>
            <person name="Kelley F."/>
            <person name="McCarron S."/>
            <person name="Jepson D."/>
            <person name="Richardson A."/>
            <person name="Raphael J."/>
            <person name="Moreira D."/>
            <person name="Taycher E."/>
            <person name="Zuo D."/>
            <person name="Mohr S."/>
            <person name="Kane M.F."/>
            <person name="Williamson J."/>
            <person name="Simpson A.J.G."/>
            <person name="Bulyk M.L."/>
            <person name="Harlow E."/>
            <person name="Marsischky G."/>
            <person name="Kolodner R.D."/>
            <person name="LaBaer J."/>
        </authorList>
    </citation>
    <scope>NUCLEOTIDE SEQUENCE [GENOMIC DNA]</scope>
    <source>
        <strain>ATCC 204508 / S288c</strain>
    </source>
</reference>
<reference key="4">
    <citation type="journal article" date="1999" name="Mol. Gen. Genet.">
        <title>Functional analysis of 150 deletion mutants in Saccharomyces cerevisiae by a systematic approach.</title>
        <authorList>
            <person name="Entian K.-D."/>
            <person name="Schuster T."/>
            <person name="Hegemann J.H."/>
            <person name="Becher D."/>
            <person name="Feldmann H."/>
            <person name="Gueldener U."/>
            <person name="Goetz R."/>
            <person name="Hansen M."/>
            <person name="Hollenberg C.P."/>
            <person name="Jansen G."/>
            <person name="Kramer W."/>
            <person name="Klein S."/>
            <person name="Koetter P."/>
            <person name="Kricke J."/>
            <person name="Launhardt H."/>
            <person name="Mannhaupt G."/>
            <person name="Maierl A."/>
            <person name="Meyer P."/>
            <person name="Mewes W."/>
            <person name="Munder T."/>
            <person name="Niedenthal R.K."/>
            <person name="Ramezani Rad M."/>
            <person name="Roehmer A."/>
            <person name="Roemer A."/>
            <person name="Rose M."/>
            <person name="Schaefer B."/>
            <person name="Siegler M.-L."/>
            <person name="Vetter J."/>
            <person name="Wilhelm N."/>
            <person name="Wolf K."/>
            <person name="Zimmermann F.K."/>
            <person name="Zollner A."/>
            <person name="Hinnen A."/>
        </authorList>
    </citation>
    <scope>FUNCTION</scope>
</reference>
<reference key="5">
    <citation type="journal article" date="1999" name="Nucleic Acids Res.">
        <title>New yeast genes important for chromosome integrity and segregation identified by dosage effects on genome stability.</title>
        <authorList>
            <person name="Ouspenski I.I."/>
            <person name="Elledge S.J."/>
            <person name="Brinkley B.R."/>
        </authorList>
    </citation>
    <scope>FUNCTION</scope>
</reference>
<reference key="6">
    <citation type="journal article" date="2001" name="Mol. Microbiol.">
        <title>Overlapping and distinct roles of the duplicated yeast transcription factors Ace2p and Swi5p.</title>
        <authorList>
            <person name="Doolin M.-T."/>
            <person name="Johnson A.L."/>
            <person name="Johnston L.H."/>
            <person name="Butler G."/>
        </authorList>
    </citation>
    <scope>INDUCTION</scope>
</reference>
<reference key="7">
    <citation type="journal article" date="2003" name="Cell">
        <title>Exit from exit: resetting the cell cycle through Amn1 inhibition of G protein signaling.</title>
        <authorList>
            <person name="Wang Y."/>
            <person name="Shirogane T."/>
            <person name="Liu D."/>
            <person name="Harper J.W."/>
            <person name="Elledge S.J."/>
        </authorList>
    </citation>
    <scope>FUNCTION</scope>
    <scope>INDUCTION</scope>
    <scope>SUBCELLULAR LOCATION</scope>
    <scope>INTERACTION WITH TEM1</scope>
</reference>
<reference key="8">
    <citation type="journal article" date="2003" name="Mol. Cell">
        <title>Assigning function to yeast proteins by integration of technologies.</title>
        <authorList>
            <person name="Hazbun T.R."/>
            <person name="Malmstroem L."/>
            <person name="Anderson S."/>
            <person name="Graczyk B.J."/>
            <person name="Fox B."/>
            <person name="Riffle M."/>
            <person name="Sundin B.A."/>
            <person name="Aranda J.D."/>
            <person name="McDonald W.H."/>
            <person name="Chiu C.-H."/>
            <person name="Snydsman B.E."/>
            <person name="Bradley P."/>
            <person name="Muller E.G.D."/>
            <person name="Fields S."/>
            <person name="Baker D."/>
            <person name="Yates J.R. III"/>
            <person name="Davis T.N."/>
        </authorList>
    </citation>
    <scope>IDENTIFICATION BY MASS SPECTROMETRY</scope>
</reference>
<reference key="9">
    <citation type="journal article" date="2003" name="Nature">
        <title>Global analysis of protein localization in budding yeast.</title>
        <authorList>
            <person name="Huh W.-K."/>
            <person name="Falvo J.V."/>
            <person name="Gerke L.C."/>
            <person name="Carroll A.S."/>
            <person name="Howson R.W."/>
            <person name="Weissman J.S."/>
            <person name="O'Shea E.K."/>
        </authorList>
    </citation>
    <scope>SUBCELLULAR LOCATION [LARGE SCALE ANALYSIS]</scope>
</reference>
<reference key="10">
    <citation type="journal article" date="2003" name="Nature">
        <title>Global analysis of protein expression in yeast.</title>
        <authorList>
            <person name="Ghaemmaghami S."/>
            <person name="Huh W.-K."/>
            <person name="Bower K."/>
            <person name="Howson R.W."/>
            <person name="Belle A."/>
            <person name="Dephoure N."/>
            <person name="O'Shea E.K."/>
            <person name="Weissman J.S."/>
        </authorList>
    </citation>
    <scope>LEVEL OF PROTEIN EXPRESSION [LARGE SCALE ANALYSIS]</scope>
</reference>
<reference key="11">
    <citation type="journal article" date="2003" name="Nat. Genet.">
        <title>Trans-acting regulatory variation in Saccharomyces cerevisiae and the role of transcription factors.</title>
        <authorList>
            <person name="Yvert G."/>
            <person name="Brem R.B."/>
            <person name="Whittle J."/>
            <person name="Akey J.M."/>
            <person name="Foss E."/>
            <person name="Smith E.N."/>
            <person name="Mackelprang R."/>
            <person name="Kruglyak L."/>
        </authorList>
    </citation>
    <scope>FUNCTION</scope>
</reference>
<reference key="12">
    <citation type="journal article" date="2006" name="Mol. Biol. Cell">
        <title>Phosphatase 2A negatively regulates mitotic exit in Saccharomyces cerevisiae.</title>
        <authorList>
            <person name="Wang Y."/>
            <person name="Ng T.-Y."/>
        </authorList>
    </citation>
    <scope>FUNCTION</scope>
</reference>
<dbReference type="EMBL" id="Z36027">
    <property type="protein sequence ID" value="CAA85117.1"/>
    <property type="molecule type" value="Genomic_DNA"/>
</dbReference>
<dbReference type="EMBL" id="AY723760">
    <property type="protein sequence ID" value="AAU09677.1"/>
    <property type="molecule type" value="Genomic_DNA"/>
</dbReference>
<dbReference type="EMBL" id="BK006936">
    <property type="protein sequence ID" value="DAA07273.1"/>
    <property type="molecule type" value="Genomic_DNA"/>
</dbReference>
<dbReference type="PIR" id="S46029">
    <property type="entry name" value="S46029"/>
</dbReference>
<dbReference type="RefSeq" id="NP_009716.1">
    <property type="nucleotide sequence ID" value="NM_001178506.1"/>
</dbReference>
<dbReference type="SMR" id="P38285"/>
<dbReference type="BioGRID" id="32857">
    <property type="interactions" value="74"/>
</dbReference>
<dbReference type="DIP" id="DIP-4930N"/>
<dbReference type="FunCoup" id="P38285">
    <property type="interactions" value="159"/>
</dbReference>
<dbReference type="IntAct" id="P38285">
    <property type="interactions" value="8"/>
</dbReference>
<dbReference type="STRING" id="4932.YBR158W"/>
<dbReference type="GlyGen" id="P38285">
    <property type="glycosylation" value="2 sites, 1 O-linked glycan (2 sites)"/>
</dbReference>
<dbReference type="iPTMnet" id="P38285"/>
<dbReference type="PaxDb" id="4932-YBR158W"/>
<dbReference type="PeptideAtlas" id="P38285"/>
<dbReference type="EnsemblFungi" id="YBR158W_mRNA">
    <property type="protein sequence ID" value="YBR158W"/>
    <property type="gene ID" value="YBR158W"/>
</dbReference>
<dbReference type="GeneID" id="852455"/>
<dbReference type="KEGG" id="sce:YBR158W"/>
<dbReference type="AGR" id="SGD:S000000362"/>
<dbReference type="SGD" id="S000000362">
    <property type="gene designation" value="AMN1"/>
</dbReference>
<dbReference type="VEuPathDB" id="FungiDB:YBR158W"/>
<dbReference type="eggNOG" id="KOG1947">
    <property type="taxonomic scope" value="Eukaryota"/>
</dbReference>
<dbReference type="HOGENOM" id="CLU_031725_1_0_1"/>
<dbReference type="InParanoid" id="P38285"/>
<dbReference type="OMA" id="IGLAGCH"/>
<dbReference type="OrthoDB" id="550575at2759"/>
<dbReference type="BioCyc" id="YEAST:G3O-29108-MONOMER"/>
<dbReference type="BioGRID-ORCS" id="852455">
    <property type="hits" value="0 hits in 10 CRISPR screens"/>
</dbReference>
<dbReference type="PRO" id="PR:P38285"/>
<dbReference type="Proteomes" id="UP000002311">
    <property type="component" value="Chromosome II"/>
</dbReference>
<dbReference type="RNAct" id="P38285">
    <property type="molecule type" value="protein"/>
</dbReference>
<dbReference type="GO" id="GO:0005933">
    <property type="term" value="C:cellular bud"/>
    <property type="evidence" value="ECO:0000314"/>
    <property type="project" value="SGD"/>
</dbReference>
<dbReference type="GO" id="GO:0005737">
    <property type="term" value="C:cytoplasm"/>
    <property type="evidence" value="ECO:0000314"/>
    <property type="project" value="SGD"/>
</dbReference>
<dbReference type="GO" id="GO:0005634">
    <property type="term" value="C:nucleus"/>
    <property type="evidence" value="ECO:0000314"/>
    <property type="project" value="SGD"/>
</dbReference>
<dbReference type="GO" id="GO:0031267">
    <property type="term" value="F:small GTPase binding"/>
    <property type="evidence" value="ECO:0000353"/>
    <property type="project" value="SGD"/>
</dbReference>
<dbReference type="GO" id="GO:0051301">
    <property type="term" value="P:cell division"/>
    <property type="evidence" value="ECO:0007669"/>
    <property type="project" value="UniProtKB-KW"/>
</dbReference>
<dbReference type="GO" id="GO:0007094">
    <property type="term" value="P:mitotic spindle assembly checkpoint signaling"/>
    <property type="evidence" value="ECO:0000315"/>
    <property type="project" value="SGD"/>
</dbReference>
<dbReference type="GO" id="GO:0031578">
    <property type="term" value="P:mitotic spindle orientation checkpoint signaling"/>
    <property type="evidence" value="ECO:0000315"/>
    <property type="project" value="SGD"/>
</dbReference>
<dbReference type="GO" id="GO:0001100">
    <property type="term" value="P:negative regulation of exit from mitosis"/>
    <property type="evidence" value="ECO:0000315"/>
    <property type="project" value="SGD"/>
</dbReference>
<dbReference type="GO" id="GO:2001042">
    <property type="term" value="P:negative regulation of septum digestion after cytokinesis"/>
    <property type="evidence" value="ECO:0000315"/>
    <property type="project" value="SGD"/>
</dbReference>
<dbReference type="GO" id="GO:0032984">
    <property type="term" value="P:protein-containing complex disassembly"/>
    <property type="evidence" value="ECO:0000315"/>
    <property type="project" value="SGD"/>
</dbReference>
<dbReference type="GO" id="GO:0031146">
    <property type="term" value="P:SCF-dependent proteasomal ubiquitin-dependent protein catabolic process"/>
    <property type="evidence" value="ECO:0000315"/>
    <property type="project" value="SGD"/>
</dbReference>
<dbReference type="CDD" id="cd09293">
    <property type="entry name" value="AMN1"/>
    <property type="match status" value="1"/>
</dbReference>
<dbReference type="Gene3D" id="3.80.10.10">
    <property type="entry name" value="Ribonuclease Inhibitor"/>
    <property type="match status" value="1"/>
</dbReference>
<dbReference type="InterPro" id="IPR006553">
    <property type="entry name" value="Leu-rich_rpt_Cys-con_subtyp"/>
</dbReference>
<dbReference type="InterPro" id="IPR032675">
    <property type="entry name" value="LRR_dom_sf"/>
</dbReference>
<dbReference type="PANTHER" id="PTHR13318">
    <property type="entry name" value="PARTNER OF PAIRED, ISOFORM B-RELATED"/>
    <property type="match status" value="1"/>
</dbReference>
<dbReference type="SMART" id="SM00367">
    <property type="entry name" value="LRR_CC"/>
    <property type="match status" value="5"/>
</dbReference>
<dbReference type="SUPFAM" id="SSF52047">
    <property type="entry name" value="RNI-like"/>
    <property type="match status" value="1"/>
</dbReference>
<name>AMN1_YEAST</name>
<comment type="function">
    <text evidence="2 3 5 6 9">Negative regulator of the mitotic exit network (MEN), required for multiple cell cycle checkpoints. Acts in the daughter cell to inhibit the mitotic exit pathway once MEN has executed its function. Through its binding ability to TEM1, interferes with the TEM1-CDC5 association, required for CDC5 kinase activation and MEN activation. Required for daughter cell separation and chromosome stability. Involved in copper sensitivity.</text>
</comment>
<comment type="subunit">
    <text evidence="5">Interacts with TEM1.</text>
</comment>
<comment type="interaction">
    <interactant intactId="EBI-20853">
        <id>P38285</id>
    </interactant>
    <interactant intactId="EBI-19113">
        <id>P38987</id>
        <label>TEM1</label>
    </interactant>
    <organismsDiffer>false</organismsDiffer>
    <experiments>6</experiments>
</comment>
<comment type="subcellular location">
    <subcellularLocation>
        <location evidence="5">Cytoplasm</location>
    </subcellularLocation>
    <subcellularLocation>
        <location evidence="5 7">Nucleus</location>
    </subcellularLocation>
</comment>
<comment type="induction">
    <text evidence="4 5">Expressed in daughter cells after execution of mitotic exit. Expression is controlled by the ACE2 and SWI5 transcription factors.</text>
</comment>
<comment type="miscellaneous">
    <text evidence="8">Present with 2020 molecules/cell in log phase SD medium.</text>
</comment>
<comment type="similarity">
    <text evidence="10">Belongs to the AMN1 family.</text>
</comment>
<evidence type="ECO:0000256" key="1">
    <source>
        <dbReference type="SAM" id="MobiDB-lite"/>
    </source>
</evidence>
<evidence type="ECO:0000269" key="2">
    <source>
    </source>
</evidence>
<evidence type="ECO:0000269" key="3">
    <source>
    </source>
</evidence>
<evidence type="ECO:0000269" key="4">
    <source>
    </source>
</evidence>
<evidence type="ECO:0000269" key="5">
    <source>
    </source>
</evidence>
<evidence type="ECO:0000269" key="6">
    <source>
    </source>
</evidence>
<evidence type="ECO:0000269" key="7">
    <source>
    </source>
</evidence>
<evidence type="ECO:0000269" key="8">
    <source>
    </source>
</evidence>
<evidence type="ECO:0000269" key="9">
    <source>
    </source>
</evidence>
<evidence type="ECO:0000305" key="10"/>
<gene>
    <name type="primary">AMN1</name>
    <name type="synonym">CST13</name>
    <name type="synonym">ICS4</name>
    <name type="ordered locus">YBR158W</name>
    <name type="ORF">YBR1208</name>
</gene>
<protein>
    <recommendedName>
        <fullName>Antagonist of mitotic exit network protein 1</fullName>
    </recommendedName>
    <alternativeName>
        <fullName>Chromosome stability protein 13</fullName>
    </alternativeName>
    <alternativeName>
        <fullName>Increased copper-sensitivity protein 4</fullName>
    </alternativeName>
</protein>
<organism>
    <name type="scientific">Saccharomyces cerevisiae (strain ATCC 204508 / S288c)</name>
    <name type="common">Baker's yeast</name>
    <dbReference type="NCBI Taxonomy" id="559292"/>
    <lineage>
        <taxon>Eukaryota</taxon>
        <taxon>Fungi</taxon>
        <taxon>Dikarya</taxon>
        <taxon>Ascomycota</taxon>
        <taxon>Saccharomycotina</taxon>
        <taxon>Saccharomycetes</taxon>
        <taxon>Saccharomycetales</taxon>
        <taxon>Saccharomycetaceae</taxon>
        <taxon>Saccharomyces</taxon>
    </lineage>
</organism>
<feature type="chain" id="PRO_0000202500" description="Antagonist of mitotic exit network protein 1">
    <location>
        <begin position="1"/>
        <end position="549"/>
    </location>
</feature>
<feature type="region of interest" description="Disordered" evidence="1">
    <location>
        <begin position="1"/>
        <end position="39"/>
    </location>
</feature>
<feature type="compositionally biased region" description="Polar residues" evidence="1">
    <location>
        <begin position="1"/>
        <end position="11"/>
    </location>
</feature>
<accession>P38285</accession>
<accession>D6VQF3</accession>
<proteinExistence type="evidence at protein level"/>